<protein>
    <recommendedName>
        <fullName evidence="1">Modulator protein MzrA</fullName>
    </recommendedName>
</protein>
<sequence>MRKPRVTLRHLAWSTMLLMVLGTGMLFWSAVRQQESTLAIRSIHQGASMPDGFSIWHHLDAHGIRFKSITPENDTLLITFDSSAQSAAAKAVLDKTLPRGYIIAQRENASQAVQWLSRLRDAPHRMG</sequence>
<dbReference type="EMBL" id="FN543502">
    <property type="protein sequence ID" value="CBG91482.1"/>
    <property type="status" value="ALT_INIT"/>
    <property type="molecule type" value="Genomic_DNA"/>
</dbReference>
<dbReference type="RefSeq" id="WP_024133083.1">
    <property type="nucleotide sequence ID" value="NC_013716.1"/>
</dbReference>
<dbReference type="SMR" id="D2TR04"/>
<dbReference type="STRING" id="637910.ROD_47911"/>
<dbReference type="KEGG" id="cro:ROD_47911"/>
<dbReference type="eggNOG" id="ENOG50333DY">
    <property type="taxonomic scope" value="Bacteria"/>
</dbReference>
<dbReference type="HOGENOM" id="CLU_153761_0_0_6"/>
<dbReference type="OrthoDB" id="6414235at2"/>
<dbReference type="Proteomes" id="UP000001889">
    <property type="component" value="Chromosome"/>
</dbReference>
<dbReference type="GO" id="GO:0005886">
    <property type="term" value="C:plasma membrane"/>
    <property type="evidence" value="ECO:0007669"/>
    <property type="project" value="UniProtKB-SubCell"/>
</dbReference>
<dbReference type="GO" id="GO:0019901">
    <property type="term" value="F:protein kinase binding"/>
    <property type="evidence" value="ECO:0007669"/>
    <property type="project" value="UniProtKB-UniRule"/>
</dbReference>
<dbReference type="Gene3D" id="3.30.70.260">
    <property type="match status" value="1"/>
</dbReference>
<dbReference type="HAMAP" id="MF_00904">
    <property type="entry name" value="Modulator_MzrA"/>
    <property type="match status" value="1"/>
</dbReference>
<dbReference type="InterPro" id="IPR026574">
    <property type="entry name" value="Modulator_MzrA"/>
</dbReference>
<dbReference type="InterPro" id="IPR027398">
    <property type="entry name" value="SecD-TM"/>
</dbReference>
<dbReference type="NCBIfam" id="NF007915">
    <property type="entry name" value="PRK10629.1"/>
    <property type="match status" value="1"/>
</dbReference>
<dbReference type="Pfam" id="PF13721">
    <property type="entry name" value="SecD-TM1"/>
    <property type="match status" value="1"/>
</dbReference>
<reference key="1">
    <citation type="journal article" date="2010" name="J. Bacteriol.">
        <title>The Citrobacter rodentium genome sequence reveals convergent evolution with human pathogenic Escherichia coli.</title>
        <authorList>
            <person name="Petty N.K."/>
            <person name="Bulgin R."/>
            <person name="Crepin V.F."/>
            <person name="Cerdeno-Tarraga A.M."/>
            <person name="Schroeder G.N."/>
            <person name="Quail M.A."/>
            <person name="Lennard N."/>
            <person name="Corton C."/>
            <person name="Barron A."/>
            <person name="Clark L."/>
            <person name="Toribio A.L."/>
            <person name="Parkhill J."/>
            <person name="Dougan G."/>
            <person name="Frankel G."/>
            <person name="Thomson N.R."/>
        </authorList>
    </citation>
    <scope>NUCLEOTIDE SEQUENCE [LARGE SCALE GENOMIC DNA]</scope>
    <source>
        <strain>ICC168</strain>
    </source>
</reference>
<comment type="function">
    <text evidence="1">Modulates the activity of the EnvZ/OmpR two-component regulatory system, probably by directly modulating EnvZ enzymatic activity and increasing stability of phosphorylated OmpR.</text>
</comment>
<comment type="subunit">
    <text evidence="1">Interacts with EnvZ.</text>
</comment>
<comment type="subcellular location">
    <subcellularLocation>
        <location evidence="1">Cell inner membrane</location>
        <topology evidence="1">Single-pass membrane protein</topology>
    </subcellularLocation>
</comment>
<comment type="similarity">
    <text evidence="1">Belongs to the MzrA family.</text>
</comment>
<comment type="sequence caution" evidence="2">
    <conflict type="erroneous initiation">
        <sequence resource="EMBL-CDS" id="CBG91482"/>
    </conflict>
    <text>Truncated N-terminus.</text>
</comment>
<feature type="chain" id="PRO_0000413177" description="Modulator protein MzrA">
    <location>
        <begin position="1"/>
        <end position="127"/>
    </location>
</feature>
<feature type="topological domain" description="Cytoplasmic" evidence="1">
    <location>
        <begin position="1"/>
        <end position="11"/>
    </location>
</feature>
<feature type="transmembrane region" description="Helical" evidence="1">
    <location>
        <begin position="12"/>
        <end position="31"/>
    </location>
</feature>
<feature type="topological domain" description="Periplasmic" evidence="1">
    <location>
        <begin position="32"/>
        <end position="127"/>
    </location>
</feature>
<name>MZRA_CITRI</name>
<keyword id="KW-0997">Cell inner membrane</keyword>
<keyword id="KW-1003">Cell membrane</keyword>
<keyword id="KW-0472">Membrane</keyword>
<keyword id="KW-1185">Reference proteome</keyword>
<keyword id="KW-0812">Transmembrane</keyword>
<keyword id="KW-1133">Transmembrane helix</keyword>
<accession>D2TR04</accession>
<evidence type="ECO:0000255" key="1">
    <source>
        <dbReference type="HAMAP-Rule" id="MF_00904"/>
    </source>
</evidence>
<evidence type="ECO:0000305" key="2"/>
<proteinExistence type="inferred from homology"/>
<gene>
    <name evidence="1" type="primary">mzrA</name>
    <name type="ordered locus">ROD_47911</name>
</gene>
<organism>
    <name type="scientific">Citrobacter rodentium (strain ICC168)</name>
    <name type="common">Citrobacter freundii biotype 4280</name>
    <dbReference type="NCBI Taxonomy" id="637910"/>
    <lineage>
        <taxon>Bacteria</taxon>
        <taxon>Pseudomonadati</taxon>
        <taxon>Pseudomonadota</taxon>
        <taxon>Gammaproteobacteria</taxon>
        <taxon>Enterobacterales</taxon>
        <taxon>Enterobacteriaceae</taxon>
        <taxon>Citrobacter</taxon>
    </lineage>
</organism>